<evidence type="ECO:0000250" key="1"/>
<evidence type="ECO:0000255" key="2"/>
<evidence type="ECO:0000256" key="3">
    <source>
        <dbReference type="SAM" id="MobiDB-lite"/>
    </source>
</evidence>
<evidence type="ECO:0000305" key="4"/>
<name>DRL18_ARATH</name>
<dbReference type="EMBL" id="AC004255">
    <property type="protein sequence ID" value="AAC13910.1"/>
    <property type="molecule type" value="Genomic_DNA"/>
</dbReference>
<dbReference type="EMBL" id="CP002684">
    <property type="protein sequence ID" value="AEE33819.1"/>
    <property type="molecule type" value="Genomic_DNA"/>
</dbReference>
<dbReference type="PIR" id="H96638">
    <property type="entry name" value="H96638"/>
</dbReference>
<dbReference type="RefSeq" id="NP_176326.2">
    <property type="nucleotide sequence ID" value="NM_104812.3"/>
</dbReference>
<dbReference type="SMR" id="O64789"/>
<dbReference type="BioGRID" id="27648">
    <property type="interactions" value="2"/>
</dbReference>
<dbReference type="STRING" id="3702.O64789"/>
<dbReference type="PaxDb" id="3702-AT1G61310.1"/>
<dbReference type="GeneID" id="842425"/>
<dbReference type="KEGG" id="ath:AT1G61310"/>
<dbReference type="Araport" id="AT1G61310"/>
<dbReference type="TAIR" id="AT1G61310"/>
<dbReference type="eggNOG" id="KOG4658">
    <property type="taxonomic scope" value="Eukaryota"/>
</dbReference>
<dbReference type="HOGENOM" id="CLU_000427_4_0_1"/>
<dbReference type="InParanoid" id="O64789"/>
<dbReference type="PhylomeDB" id="O64789"/>
<dbReference type="PRO" id="PR:O64789"/>
<dbReference type="Proteomes" id="UP000006548">
    <property type="component" value="Chromosome 1"/>
</dbReference>
<dbReference type="ExpressionAtlas" id="O64789">
    <property type="expression patterns" value="baseline and differential"/>
</dbReference>
<dbReference type="GO" id="GO:0043531">
    <property type="term" value="F:ADP binding"/>
    <property type="evidence" value="ECO:0007669"/>
    <property type="project" value="InterPro"/>
</dbReference>
<dbReference type="GO" id="GO:0005524">
    <property type="term" value="F:ATP binding"/>
    <property type="evidence" value="ECO:0007669"/>
    <property type="project" value="UniProtKB-KW"/>
</dbReference>
<dbReference type="GO" id="GO:0098542">
    <property type="term" value="P:defense response to other organism"/>
    <property type="evidence" value="ECO:0000318"/>
    <property type="project" value="GO_Central"/>
</dbReference>
<dbReference type="FunFam" id="3.80.10.10:FF:001644">
    <property type="entry name" value="LRR and NB-ARC domains-containing disease resistance protein"/>
    <property type="match status" value="1"/>
</dbReference>
<dbReference type="FunFam" id="3.80.10.10:FF:001429">
    <property type="entry name" value="Probable disease resistance protein At1g61190"/>
    <property type="match status" value="1"/>
</dbReference>
<dbReference type="FunFam" id="3.40.50.300:FF:001091">
    <property type="entry name" value="Probable disease resistance protein At1g61300"/>
    <property type="match status" value="1"/>
</dbReference>
<dbReference type="FunFam" id="1.10.10.10:FF:000322">
    <property type="entry name" value="Probable disease resistance protein At1g63360"/>
    <property type="match status" value="1"/>
</dbReference>
<dbReference type="FunFam" id="1.10.8.430:FF:000003">
    <property type="entry name" value="Probable disease resistance protein At5g66910"/>
    <property type="match status" value="1"/>
</dbReference>
<dbReference type="Gene3D" id="1.10.8.430">
    <property type="entry name" value="Helical domain of apoptotic protease-activating factors"/>
    <property type="match status" value="1"/>
</dbReference>
<dbReference type="Gene3D" id="3.40.50.300">
    <property type="entry name" value="P-loop containing nucleotide triphosphate hydrolases"/>
    <property type="match status" value="1"/>
</dbReference>
<dbReference type="Gene3D" id="3.80.10.10">
    <property type="entry name" value="Ribonuclease Inhibitor"/>
    <property type="match status" value="1"/>
</dbReference>
<dbReference type="Gene3D" id="1.10.10.10">
    <property type="entry name" value="Winged helix-like DNA-binding domain superfamily/Winged helix DNA-binding domain"/>
    <property type="match status" value="1"/>
</dbReference>
<dbReference type="InterPro" id="IPR042197">
    <property type="entry name" value="Apaf_helical"/>
</dbReference>
<dbReference type="InterPro" id="IPR032675">
    <property type="entry name" value="LRR_dom_sf"/>
</dbReference>
<dbReference type="InterPro" id="IPR055414">
    <property type="entry name" value="LRR_R13L4/SHOC2-like"/>
</dbReference>
<dbReference type="InterPro" id="IPR002182">
    <property type="entry name" value="NB-ARC"/>
</dbReference>
<dbReference type="InterPro" id="IPR027417">
    <property type="entry name" value="P-loop_NTPase"/>
</dbReference>
<dbReference type="InterPro" id="IPR050905">
    <property type="entry name" value="Plant_NBS-LRR"/>
</dbReference>
<dbReference type="InterPro" id="IPR036388">
    <property type="entry name" value="WH-like_DNA-bd_sf"/>
</dbReference>
<dbReference type="PANTHER" id="PTHR33463:SF220">
    <property type="entry name" value="NB-ARC DOMAIN-CONTAINING PROTEIN"/>
    <property type="match status" value="1"/>
</dbReference>
<dbReference type="PANTHER" id="PTHR33463">
    <property type="entry name" value="NB-ARC DOMAIN-CONTAINING PROTEIN-RELATED"/>
    <property type="match status" value="1"/>
</dbReference>
<dbReference type="Pfam" id="PF23598">
    <property type="entry name" value="LRR_14"/>
    <property type="match status" value="1"/>
</dbReference>
<dbReference type="Pfam" id="PF00931">
    <property type="entry name" value="NB-ARC"/>
    <property type="match status" value="1"/>
</dbReference>
<dbReference type="PRINTS" id="PR00364">
    <property type="entry name" value="DISEASERSIST"/>
</dbReference>
<dbReference type="SUPFAM" id="SSF52058">
    <property type="entry name" value="L domain-like"/>
    <property type="match status" value="1"/>
</dbReference>
<dbReference type="SUPFAM" id="SSF52540">
    <property type="entry name" value="P-loop containing nucleoside triphosphate hydrolases"/>
    <property type="match status" value="1"/>
</dbReference>
<keyword id="KW-0067">ATP-binding</keyword>
<keyword id="KW-0175">Coiled coil</keyword>
<keyword id="KW-0433">Leucine-rich repeat</keyword>
<keyword id="KW-0547">Nucleotide-binding</keyword>
<keyword id="KW-0611">Plant defense</keyword>
<keyword id="KW-1185">Reference proteome</keyword>
<keyword id="KW-0677">Repeat</keyword>
<organism>
    <name type="scientific">Arabidopsis thaliana</name>
    <name type="common">Mouse-ear cress</name>
    <dbReference type="NCBI Taxonomy" id="3702"/>
    <lineage>
        <taxon>Eukaryota</taxon>
        <taxon>Viridiplantae</taxon>
        <taxon>Streptophyta</taxon>
        <taxon>Embryophyta</taxon>
        <taxon>Tracheophyta</taxon>
        <taxon>Spermatophyta</taxon>
        <taxon>Magnoliopsida</taxon>
        <taxon>eudicotyledons</taxon>
        <taxon>Gunneridae</taxon>
        <taxon>Pentapetalae</taxon>
        <taxon>rosids</taxon>
        <taxon>malvids</taxon>
        <taxon>Brassicales</taxon>
        <taxon>Brassicaceae</taxon>
        <taxon>Camelineae</taxon>
        <taxon>Arabidopsis</taxon>
    </lineage>
</organism>
<proteinExistence type="evidence at transcript level"/>
<gene>
    <name type="ordered locus">At1g61310</name>
    <name type="ORF">T1F9.20</name>
</gene>
<protein>
    <recommendedName>
        <fullName>Probable disease resistance protein At1g61310</fullName>
    </recommendedName>
</protein>
<comment type="function">
    <text evidence="1">Probable disease resistance protein.</text>
</comment>
<comment type="domain">
    <text evidence="1">The LRR repeats probably act as specificity determinant of pathogen recognition.</text>
</comment>
<comment type="similarity">
    <text evidence="4">Belongs to the disease resistance NB-LRR family.</text>
</comment>
<comment type="online information" name="NIB-LRRS">
    <link uri="http://niblrrs.ucdavis.edu"/>
    <text>Functional and comparative genomics of disease resistance gene homologs</text>
</comment>
<feature type="chain" id="PRO_0000212750" description="Probable disease resistance protein At1g61310">
    <location>
        <begin position="1"/>
        <end position="925"/>
    </location>
</feature>
<feature type="domain" description="NB-ARC">
    <location>
        <begin position="139"/>
        <end position="442"/>
    </location>
</feature>
<feature type="repeat" description="LRR 1">
    <location>
        <begin position="525"/>
        <end position="546"/>
    </location>
</feature>
<feature type="repeat" description="LRR 2">
    <location>
        <begin position="547"/>
        <end position="568"/>
    </location>
</feature>
<feature type="repeat" description="LRR 3">
    <location>
        <begin position="571"/>
        <end position="594"/>
    </location>
</feature>
<feature type="repeat" description="LRR 4">
    <location>
        <begin position="595"/>
        <end position="617"/>
    </location>
</feature>
<feature type="repeat" description="LRR 5">
    <location>
        <begin position="618"/>
        <end position="640"/>
    </location>
</feature>
<feature type="repeat" description="LRR 6">
    <location>
        <begin position="641"/>
        <end position="663"/>
    </location>
</feature>
<feature type="region of interest" description="Disordered" evidence="3">
    <location>
        <begin position="134"/>
        <end position="154"/>
    </location>
</feature>
<feature type="coiled-coil region" evidence="2">
    <location>
        <begin position="25"/>
        <end position="69"/>
    </location>
</feature>
<feature type="binding site" evidence="2">
    <location>
        <begin position="181"/>
        <end position="188"/>
    </location>
    <ligand>
        <name>ATP</name>
        <dbReference type="ChEBI" id="CHEBI:30616"/>
    </ligand>
</feature>
<feature type="sequence conflict" description="In Ref. 2; AEE33819." evidence="4" ref="2">
    <original>K</original>
    <variation>Q</variation>
    <location>
        <position position="34"/>
    </location>
</feature>
<sequence>MGSCFSFQIAVGDQTMNRIFDCLIGKSYIRTLEKNLRALQREMEDLRATQHEVQNKVAREESRHQQRLEAVQVWLDRVNSIDIECKDLLSVSPVELQKLCLCGLCTKYVCSSYKYGKKVFLLLEEVKILKSEGNFDEVSQPPPRSEVEERPTQPTIGQEEMLEKAWNRLMEDGVGIMGLHGMGGVGKTTLFKKIHNKFAEIGGTFDIVIWIVVSQGAKLSKLQEDIAEKLHLCDDLWKNKNESDKATDIHRVLKGKRFVLMLDDIWEKVDLEAIGIPYPSEVNKCKVAFTTRSREVCGEMGDHKPMQVNCLEPEDAWELFKNKVGDNTLSSDPVIVGLAREVAQKCRGLPLALNVIGETMASKTMVQEWEYAIDVLTRSAAEFSGMENKILPILKYSYDSLGDEHIKSCFLYCALFPEDGQIYTETLIDKLICEGFIGEDQVIKRARNKGYAMLGTLTRANLLTKVGTELANLLTKVSIYHCVMHDVVREMALWIASDFGKQKENFVVQASAGLHEIPEVKDWGAVRRMSLMRNEIEEITCESKCSELTTLFLQSNQLKNLSGEFIRYMQKLVVLDLSDNRDFNELPEQISGLVSLQYLDLSFTRIEQLPVGLKELKKLTFLDLAYTARLCSISGISRLLSLRVLSLLGSKVHGDASVLKELQQLENLQDLAITLSAELISLDQRLAKVISILGIEGFLQKPFDLSFLASMENLSSLWVKNSYFSEIKCRESETDSSYLHINPKIPCFTNLSRLDIVKCHSMKDLTWILFAPNLVVLFIEDSREVGEIINKEKATNLTSITPFLKLERLILCYLPKLESIYWSPLPFPLLLNIDVEECPKLRKLPLNATSAPKVEEFRILMYPPELEWEDEDTKNRFLPEMVSTSTSSKDPLLRNGIPRCLKSESTLLLLILLYLSSCRAFGLYN</sequence>
<reference key="1">
    <citation type="journal article" date="2000" name="Nature">
        <title>Sequence and analysis of chromosome 1 of the plant Arabidopsis thaliana.</title>
        <authorList>
            <person name="Theologis A."/>
            <person name="Ecker J.R."/>
            <person name="Palm C.J."/>
            <person name="Federspiel N.A."/>
            <person name="Kaul S."/>
            <person name="White O."/>
            <person name="Alonso J."/>
            <person name="Altafi H."/>
            <person name="Araujo R."/>
            <person name="Bowman C.L."/>
            <person name="Brooks S.Y."/>
            <person name="Buehler E."/>
            <person name="Chan A."/>
            <person name="Chao Q."/>
            <person name="Chen H."/>
            <person name="Cheuk R.F."/>
            <person name="Chin C.W."/>
            <person name="Chung M.K."/>
            <person name="Conn L."/>
            <person name="Conway A.B."/>
            <person name="Conway A.R."/>
            <person name="Creasy T.H."/>
            <person name="Dewar K."/>
            <person name="Dunn P."/>
            <person name="Etgu P."/>
            <person name="Feldblyum T.V."/>
            <person name="Feng J.-D."/>
            <person name="Fong B."/>
            <person name="Fujii C.Y."/>
            <person name="Gill J.E."/>
            <person name="Goldsmith A.D."/>
            <person name="Haas B."/>
            <person name="Hansen N.F."/>
            <person name="Hughes B."/>
            <person name="Huizar L."/>
            <person name="Hunter J.L."/>
            <person name="Jenkins J."/>
            <person name="Johnson-Hopson C."/>
            <person name="Khan S."/>
            <person name="Khaykin E."/>
            <person name="Kim C.J."/>
            <person name="Koo H.L."/>
            <person name="Kremenetskaia I."/>
            <person name="Kurtz D.B."/>
            <person name="Kwan A."/>
            <person name="Lam B."/>
            <person name="Langin-Hooper S."/>
            <person name="Lee A."/>
            <person name="Lee J.M."/>
            <person name="Lenz C.A."/>
            <person name="Li J.H."/>
            <person name="Li Y.-P."/>
            <person name="Lin X."/>
            <person name="Liu S.X."/>
            <person name="Liu Z.A."/>
            <person name="Luros J.S."/>
            <person name="Maiti R."/>
            <person name="Marziali A."/>
            <person name="Militscher J."/>
            <person name="Miranda M."/>
            <person name="Nguyen M."/>
            <person name="Nierman W.C."/>
            <person name="Osborne B.I."/>
            <person name="Pai G."/>
            <person name="Peterson J."/>
            <person name="Pham P.K."/>
            <person name="Rizzo M."/>
            <person name="Rooney T."/>
            <person name="Rowley D."/>
            <person name="Sakano H."/>
            <person name="Salzberg S.L."/>
            <person name="Schwartz J.R."/>
            <person name="Shinn P."/>
            <person name="Southwick A.M."/>
            <person name="Sun H."/>
            <person name="Tallon L.J."/>
            <person name="Tambunga G."/>
            <person name="Toriumi M.J."/>
            <person name="Town C.D."/>
            <person name="Utterback T."/>
            <person name="Van Aken S."/>
            <person name="Vaysberg M."/>
            <person name="Vysotskaia V.S."/>
            <person name="Walker M."/>
            <person name="Wu D."/>
            <person name="Yu G."/>
            <person name="Fraser C.M."/>
            <person name="Venter J.C."/>
            <person name="Davis R.W."/>
        </authorList>
    </citation>
    <scope>NUCLEOTIDE SEQUENCE [LARGE SCALE GENOMIC DNA]</scope>
    <source>
        <strain>cv. Columbia</strain>
    </source>
</reference>
<reference key="2">
    <citation type="journal article" date="2017" name="Plant J.">
        <title>Araport11: a complete reannotation of the Arabidopsis thaliana reference genome.</title>
        <authorList>
            <person name="Cheng C.Y."/>
            <person name="Krishnakumar V."/>
            <person name="Chan A.P."/>
            <person name="Thibaud-Nissen F."/>
            <person name="Schobel S."/>
            <person name="Town C.D."/>
        </authorList>
    </citation>
    <scope>GENOME REANNOTATION</scope>
    <scope>SEQUENCE REVISION</scope>
    <source>
        <strain>cv. Columbia</strain>
    </source>
</reference>
<accession>O64789</accession>
<accession>F4HTJ4</accession>